<reference key="1">
    <citation type="journal article" date="2003" name="Nat. Biotechnol.">
        <title>The genome sequence of the entomopathogenic bacterium Photorhabdus luminescens.</title>
        <authorList>
            <person name="Duchaud E."/>
            <person name="Rusniok C."/>
            <person name="Frangeul L."/>
            <person name="Buchrieser C."/>
            <person name="Givaudan A."/>
            <person name="Taourit S."/>
            <person name="Bocs S."/>
            <person name="Boursaux-Eude C."/>
            <person name="Chandler M."/>
            <person name="Charles J.-F."/>
            <person name="Dassa E."/>
            <person name="Derose R."/>
            <person name="Derzelle S."/>
            <person name="Freyssinet G."/>
            <person name="Gaudriault S."/>
            <person name="Medigue C."/>
            <person name="Lanois A."/>
            <person name="Powell K."/>
            <person name="Siguier P."/>
            <person name="Vincent R."/>
            <person name="Wingate V."/>
            <person name="Zouine M."/>
            <person name="Glaser P."/>
            <person name="Boemare N."/>
            <person name="Danchin A."/>
            <person name="Kunst F."/>
        </authorList>
    </citation>
    <scope>NUCLEOTIDE SEQUENCE [LARGE SCALE GENOMIC DNA]</scope>
    <source>
        <strain>DSM 15139 / CIP 105565 / TT01</strain>
    </source>
</reference>
<comment type="function">
    <text evidence="1">Catalyzes the formation of putrescine from agmatine.</text>
</comment>
<comment type="catalytic activity">
    <reaction evidence="1">
        <text>agmatine + H2O = urea + putrescine</text>
        <dbReference type="Rhea" id="RHEA:13929"/>
        <dbReference type="ChEBI" id="CHEBI:15377"/>
        <dbReference type="ChEBI" id="CHEBI:16199"/>
        <dbReference type="ChEBI" id="CHEBI:58145"/>
        <dbReference type="ChEBI" id="CHEBI:326268"/>
        <dbReference type="EC" id="3.5.3.11"/>
    </reaction>
</comment>
<comment type="cofactor">
    <cofactor evidence="1">
        <name>Mn(2+)</name>
        <dbReference type="ChEBI" id="CHEBI:29035"/>
    </cofactor>
</comment>
<comment type="pathway">
    <text evidence="1">Amine and polyamine biosynthesis; putrescine biosynthesis via agmatine pathway; putrescine from agmatine: step 1/1.</text>
</comment>
<comment type="similarity">
    <text evidence="1">Belongs to the arginase family. Agmatinase subfamily.</text>
</comment>
<keyword id="KW-0378">Hydrolase</keyword>
<keyword id="KW-0464">Manganese</keyword>
<keyword id="KW-0479">Metal-binding</keyword>
<keyword id="KW-0620">Polyamine biosynthesis</keyword>
<keyword id="KW-0661">Putrescine biosynthesis</keyword>
<keyword id="KW-1185">Reference proteome</keyword>
<keyword id="KW-0745">Spermidine biosynthesis</keyword>
<protein>
    <recommendedName>
        <fullName evidence="1">Agmatinase</fullName>
        <ecNumber evidence="1">3.5.3.11</ecNumber>
    </recommendedName>
    <alternativeName>
        <fullName evidence="1">Agmatine ureohydrolase</fullName>
        <shortName evidence="1">AUH</shortName>
    </alternativeName>
</protein>
<evidence type="ECO:0000255" key="1">
    <source>
        <dbReference type="HAMAP-Rule" id="MF_01418"/>
    </source>
</evidence>
<sequence length="307" mass="33668">MTISTLGNQQDDSLVSNAFGFLRFPLNFQPYSSDAEWVITGVPFDMATSGRAGSRHGPAAIRQVSTNLAWESRRWPWDFKLHNCLKVVDCGDVVFNFGDAQDMSDKLQAHAEKVLASGKRMLSFGGDHFITLPLLRAHAKHFGKMALVHFDAHADTYPNGSQFDHGTMFYHAPNEGLIDPHHSVQIGIRTEHGRDNGFTVLDADQVNDRSVDDLLAQIKETVGDMPVYLTFDIDCLDPAFAPGTGTPVIGGLTTDRALKLLRGLQPLNIVGMDVVEVAPAYDQSEITALAGATIALEMLYLQASKKR</sequence>
<name>SPEB_PHOLL</name>
<feature type="chain" id="PRO_0000173737" description="Agmatinase">
    <location>
        <begin position="1"/>
        <end position="307"/>
    </location>
</feature>
<feature type="binding site" evidence="1">
    <location>
        <position position="128"/>
    </location>
    <ligand>
        <name>Mn(2+)</name>
        <dbReference type="ChEBI" id="CHEBI:29035"/>
    </ligand>
</feature>
<feature type="binding site" evidence="1">
    <location>
        <position position="151"/>
    </location>
    <ligand>
        <name>Mn(2+)</name>
        <dbReference type="ChEBI" id="CHEBI:29035"/>
    </ligand>
</feature>
<feature type="binding site" evidence="1">
    <location>
        <position position="153"/>
    </location>
    <ligand>
        <name>Mn(2+)</name>
        <dbReference type="ChEBI" id="CHEBI:29035"/>
    </ligand>
</feature>
<feature type="binding site" evidence="1">
    <location>
        <position position="155"/>
    </location>
    <ligand>
        <name>Mn(2+)</name>
        <dbReference type="ChEBI" id="CHEBI:29035"/>
    </ligand>
</feature>
<feature type="binding site" evidence="1">
    <location>
        <position position="232"/>
    </location>
    <ligand>
        <name>Mn(2+)</name>
        <dbReference type="ChEBI" id="CHEBI:29035"/>
    </ligand>
</feature>
<feature type="binding site" evidence="1">
    <location>
        <position position="234"/>
    </location>
    <ligand>
        <name>Mn(2+)</name>
        <dbReference type="ChEBI" id="CHEBI:29035"/>
    </ligand>
</feature>
<organism>
    <name type="scientific">Photorhabdus laumondii subsp. laumondii (strain DSM 15139 / CIP 105565 / TT01)</name>
    <name type="common">Photorhabdus luminescens subsp. laumondii</name>
    <dbReference type="NCBI Taxonomy" id="243265"/>
    <lineage>
        <taxon>Bacteria</taxon>
        <taxon>Pseudomonadati</taxon>
        <taxon>Pseudomonadota</taxon>
        <taxon>Gammaproteobacteria</taxon>
        <taxon>Enterobacterales</taxon>
        <taxon>Morganellaceae</taxon>
        <taxon>Photorhabdus</taxon>
    </lineage>
</organism>
<proteinExistence type="inferred from homology"/>
<gene>
    <name evidence="1" type="primary">speB</name>
    <name type="ordered locus">plu3680</name>
</gene>
<dbReference type="EC" id="3.5.3.11" evidence="1"/>
<dbReference type="EMBL" id="BX571871">
    <property type="protein sequence ID" value="CAE16053.1"/>
    <property type="molecule type" value="Genomic_DNA"/>
</dbReference>
<dbReference type="RefSeq" id="WP_011147843.1">
    <property type="nucleotide sequence ID" value="NC_005126.1"/>
</dbReference>
<dbReference type="SMR" id="Q7N122"/>
<dbReference type="STRING" id="243265.plu3680"/>
<dbReference type="GeneID" id="48849923"/>
<dbReference type="KEGG" id="plu:plu3680"/>
<dbReference type="eggNOG" id="COG0010">
    <property type="taxonomic scope" value="Bacteria"/>
</dbReference>
<dbReference type="HOGENOM" id="CLU_039478_0_0_6"/>
<dbReference type="OrthoDB" id="9789727at2"/>
<dbReference type="UniPathway" id="UPA00534">
    <property type="reaction ID" value="UER00287"/>
</dbReference>
<dbReference type="Proteomes" id="UP000002514">
    <property type="component" value="Chromosome"/>
</dbReference>
<dbReference type="GO" id="GO:0008783">
    <property type="term" value="F:agmatinase activity"/>
    <property type="evidence" value="ECO:0007669"/>
    <property type="project" value="UniProtKB-UniRule"/>
</dbReference>
<dbReference type="GO" id="GO:0030145">
    <property type="term" value="F:manganese ion binding"/>
    <property type="evidence" value="ECO:0007669"/>
    <property type="project" value="InterPro"/>
</dbReference>
<dbReference type="GO" id="GO:0033389">
    <property type="term" value="P:putrescine biosynthetic process from arginine, via agmatine"/>
    <property type="evidence" value="ECO:0007669"/>
    <property type="project" value="TreeGrafter"/>
</dbReference>
<dbReference type="GO" id="GO:0008295">
    <property type="term" value="P:spermidine biosynthetic process"/>
    <property type="evidence" value="ECO:0007669"/>
    <property type="project" value="UniProtKB-UniRule"/>
</dbReference>
<dbReference type="CDD" id="cd11592">
    <property type="entry name" value="Agmatinase_PAH"/>
    <property type="match status" value="1"/>
</dbReference>
<dbReference type="FunFam" id="3.40.800.10:FF:000001">
    <property type="entry name" value="Agmatinase"/>
    <property type="match status" value="1"/>
</dbReference>
<dbReference type="Gene3D" id="3.40.800.10">
    <property type="entry name" value="Ureohydrolase domain"/>
    <property type="match status" value="1"/>
</dbReference>
<dbReference type="HAMAP" id="MF_01418">
    <property type="entry name" value="SpeB"/>
    <property type="match status" value="1"/>
</dbReference>
<dbReference type="InterPro" id="IPR023694">
    <property type="entry name" value="Agmatinase"/>
</dbReference>
<dbReference type="InterPro" id="IPR005925">
    <property type="entry name" value="Agmatinase-rel"/>
</dbReference>
<dbReference type="InterPro" id="IPR006035">
    <property type="entry name" value="Ureohydrolase"/>
</dbReference>
<dbReference type="InterPro" id="IPR023696">
    <property type="entry name" value="Ureohydrolase_dom_sf"/>
</dbReference>
<dbReference type="InterPro" id="IPR020855">
    <property type="entry name" value="Ureohydrolase_Mn_BS"/>
</dbReference>
<dbReference type="NCBIfam" id="TIGR01230">
    <property type="entry name" value="agmatinase"/>
    <property type="match status" value="1"/>
</dbReference>
<dbReference type="NCBIfam" id="NF002564">
    <property type="entry name" value="PRK02190.1"/>
    <property type="match status" value="1"/>
</dbReference>
<dbReference type="PANTHER" id="PTHR11358">
    <property type="entry name" value="ARGINASE/AGMATINASE"/>
    <property type="match status" value="1"/>
</dbReference>
<dbReference type="PANTHER" id="PTHR11358:SF26">
    <property type="entry name" value="GUANIDINO ACID HYDROLASE, MITOCHONDRIAL"/>
    <property type="match status" value="1"/>
</dbReference>
<dbReference type="Pfam" id="PF00491">
    <property type="entry name" value="Arginase"/>
    <property type="match status" value="1"/>
</dbReference>
<dbReference type="PIRSF" id="PIRSF036979">
    <property type="entry name" value="Arginase"/>
    <property type="match status" value="1"/>
</dbReference>
<dbReference type="SUPFAM" id="SSF52768">
    <property type="entry name" value="Arginase/deacetylase"/>
    <property type="match status" value="1"/>
</dbReference>
<dbReference type="PROSITE" id="PS01053">
    <property type="entry name" value="ARGINASE_1"/>
    <property type="match status" value="1"/>
</dbReference>
<dbReference type="PROSITE" id="PS51409">
    <property type="entry name" value="ARGINASE_2"/>
    <property type="match status" value="1"/>
</dbReference>
<accession>Q7N122</accession>